<protein>
    <recommendedName>
        <fullName>WD repeat-containing protein 48</fullName>
    </recommendedName>
    <alternativeName>
        <fullName>USP1-associated factor 1</fullName>
    </alternativeName>
</protein>
<dbReference type="EMBL" id="BC123017">
    <property type="protein sequence ID" value="AAI23018.1"/>
    <property type="molecule type" value="mRNA"/>
</dbReference>
<dbReference type="RefSeq" id="NP_001072858.1">
    <property type="nucleotide sequence ID" value="NM_001079390.1"/>
</dbReference>
<dbReference type="SMR" id="Q05B17"/>
<dbReference type="FunCoup" id="Q05B17">
    <property type="interactions" value="5543"/>
</dbReference>
<dbReference type="STRING" id="8364.ENSXETP00000018392"/>
<dbReference type="PaxDb" id="8364-ENSXETP00000009249"/>
<dbReference type="GeneID" id="780319"/>
<dbReference type="KEGG" id="xtr:780319"/>
<dbReference type="AGR" id="Xenbase:XB-GENE-976371"/>
<dbReference type="CTD" id="57599"/>
<dbReference type="Xenbase" id="XB-GENE-976371">
    <property type="gene designation" value="wdr48"/>
</dbReference>
<dbReference type="eggNOG" id="KOG0308">
    <property type="taxonomic scope" value="Eukaryota"/>
</dbReference>
<dbReference type="HOGENOM" id="CLU_014960_0_1_1"/>
<dbReference type="InParanoid" id="Q05B17"/>
<dbReference type="OMA" id="IRHYHIL"/>
<dbReference type="OrthoDB" id="2421129at2759"/>
<dbReference type="PhylomeDB" id="Q05B17"/>
<dbReference type="TreeFam" id="TF315205"/>
<dbReference type="Reactome" id="R-XTR-110314">
    <property type="pathway name" value="Recognition of DNA damage by PCNA-containing replication complex"/>
</dbReference>
<dbReference type="Reactome" id="R-XTR-5689880">
    <property type="pathway name" value="Ub-specific processing proteases"/>
</dbReference>
<dbReference type="Proteomes" id="UP000008143">
    <property type="component" value="Chromosome 6"/>
</dbReference>
<dbReference type="Bgee" id="ENSXETG00000004247">
    <property type="expression patterns" value="Expressed in testis and 12 other cell types or tissues"/>
</dbReference>
<dbReference type="GO" id="GO:0005770">
    <property type="term" value="C:late endosome"/>
    <property type="evidence" value="ECO:0007669"/>
    <property type="project" value="UniProtKB-SubCell"/>
</dbReference>
<dbReference type="GO" id="GO:0005764">
    <property type="term" value="C:lysosome"/>
    <property type="evidence" value="ECO:0007669"/>
    <property type="project" value="UniProtKB-SubCell"/>
</dbReference>
<dbReference type="GO" id="GO:0005634">
    <property type="term" value="C:nucleus"/>
    <property type="evidence" value="ECO:0000250"/>
    <property type="project" value="UniProtKB"/>
</dbReference>
<dbReference type="GO" id="GO:0035800">
    <property type="term" value="F:deubiquitinase activator activity"/>
    <property type="evidence" value="ECO:0000250"/>
    <property type="project" value="UniProtKB"/>
</dbReference>
<dbReference type="GO" id="GO:0003677">
    <property type="term" value="F:DNA binding"/>
    <property type="evidence" value="ECO:0000250"/>
    <property type="project" value="UniProtKB"/>
</dbReference>
<dbReference type="GO" id="GO:0003690">
    <property type="term" value="F:double-stranded DNA binding"/>
    <property type="evidence" value="ECO:0000250"/>
    <property type="project" value="UniProtKB"/>
</dbReference>
<dbReference type="GO" id="GO:0003697">
    <property type="term" value="F:single-stranded DNA binding"/>
    <property type="evidence" value="ECO:0000250"/>
    <property type="project" value="UniProtKB"/>
</dbReference>
<dbReference type="GO" id="GO:0006974">
    <property type="term" value="P:DNA damage response"/>
    <property type="evidence" value="ECO:0000250"/>
    <property type="project" value="UniProtKB"/>
</dbReference>
<dbReference type="GO" id="GO:0006281">
    <property type="term" value="P:DNA repair"/>
    <property type="evidence" value="ECO:0007669"/>
    <property type="project" value="UniProtKB-KW"/>
</dbReference>
<dbReference type="GO" id="GO:1905168">
    <property type="term" value="P:positive regulation of double-strand break repair via homologous recombination"/>
    <property type="evidence" value="ECO:0000250"/>
    <property type="project" value="UniProtKB"/>
</dbReference>
<dbReference type="CDD" id="cd17041">
    <property type="entry name" value="Ubl_WDR48"/>
    <property type="match status" value="1"/>
</dbReference>
<dbReference type="CDD" id="cd00200">
    <property type="entry name" value="WD40"/>
    <property type="match status" value="1"/>
</dbReference>
<dbReference type="FunFam" id="2.130.10.10:FF:000054">
    <property type="entry name" value="Putative WD repeat-containing protein 48"/>
    <property type="match status" value="1"/>
</dbReference>
<dbReference type="FunFam" id="2.130.10.10:FF:002031">
    <property type="entry name" value="WD repeat domain 48b"/>
    <property type="match status" value="1"/>
</dbReference>
<dbReference type="Gene3D" id="2.130.10.10">
    <property type="entry name" value="YVTN repeat-like/Quinoprotein amine dehydrogenase"/>
    <property type="match status" value="2"/>
</dbReference>
<dbReference type="InterPro" id="IPR020472">
    <property type="entry name" value="G-protein_beta_WD-40_rep"/>
</dbReference>
<dbReference type="InterPro" id="IPR015943">
    <property type="entry name" value="WD40/YVTN_repeat-like_dom_sf"/>
</dbReference>
<dbReference type="InterPro" id="IPR019775">
    <property type="entry name" value="WD40_repeat_CS"/>
</dbReference>
<dbReference type="InterPro" id="IPR036322">
    <property type="entry name" value="WD40_repeat_dom_sf"/>
</dbReference>
<dbReference type="InterPro" id="IPR001680">
    <property type="entry name" value="WD40_rpt"/>
</dbReference>
<dbReference type="InterPro" id="IPR051246">
    <property type="entry name" value="WDR48"/>
</dbReference>
<dbReference type="InterPro" id="IPR021772">
    <property type="entry name" value="WDR48/Bun107"/>
</dbReference>
<dbReference type="PANTHER" id="PTHR19862">
    <property type="entry name" value="WD REPEAT-CONTAINING PROTEIN 48"/>
    <property type="match status" value="1"/>
</dbReference>
<dbReference type="PANTHER" id="PTHR19862:SF14">
    <property type="entry name" value="WD REPEAT-CONTAINING PROTEIN 48"/>
    <property type="match status" value="1"/>
</dbReference>
<dbReference type="Pfam" id="PF11816">
    <property type="entry name" value="DUF3337"/>
    <property type="match status" value="1"/>
</dbReference>
<dbReference type="Pfam" id="PF00400">
    <property type="entry name" value="WD40"/>
    <property type="match status" value="6"/>
</dbReference>
<dbReference type="PRINTS" id="PR00320">
    <property type="entry name" value="GPROTEINBRPT"/>
</dbReference>
<dbReference type="SMART" id="SM00320">
    <property type="entry name" value="WD40"/>
    <property type="match status" value="7"/>
</dbReference>
<dbReference type="SUPFAM" id="SSF50978">
    <property type="entry name" value="WD40 repeat-like"/>
    <property type="match status" value="1"/>
</dbReference>
<dbReference type="PROSITE" id="PS00678">
    <property type="entry name" value="WD_REPEATS_1"/>
    <property type="match status" value="3"/>
</dbReference>
<dbReference type="PROSITE" id="PS50082">
    <property type="entry name" value="WD_REPEATS_2"/>
    <property type="match status" value="5"/>
</dbReference>
<dbReference type="PROSITE" id="PS50294">
    <property type="entry name" value="WD_REPEATS_REGION"/>
    <property type="match status" value="1"/>
</dbReference>
<accession>Q05B17</accession>
<name>WDR48_XENTR</name>
<proteinExistence type="evidence at transcript level"/>
<sequence length="678" mass="76353">MAAHHRQNTAGRRKVQVSYVIRDEVEKYNRNGVNALQLDPALNRLFTAGRDSIIRIWNVNQHKQDPYIASMEHHTDWVNDIVLCCNGKTLISASSDTTVKVWNAHKGFCMSTLRTHKDYVKALAYAKDKELVASAGLDRQIFLWDVNTLTALTASNNTVTTSSLSGNKDSIYSLAMNQMGTVIVSGSTEKVLRVWDPRTCQKLMKLKGHTDNVKALLLNRDGTQCLSGSSDGTIRLWSLGQQRCIATYRVHDEGVWALQVNEGFTHVYSGGRDRKIYCTDLRNPDIRLLICEEKAPVLKMELDRSADPPLALWVATTKSSVNKWPIKGILNFRSSGDYENDCSTPLSPICSQPDQVIKGGASIIQCNILNDKRHILTKDTNNNVAYWDVLKACKVEDLGKVDFEEEIKKRFKMVYVPNWFSVDLKTGMLTITLDESDCFAAWVSAKDAGFSSPDGSDPKLNLGGLLLQALLEFWPRTHINPMEEEENEVNHVANGEQENRIQKGNGYFQVPPHTPVIFGEAGGRTLFRLLCRDSGGETESMLLNETVPQWVIDITVDKNMPKFNKIPFYLQPHSSSGAKTLKKDRLSASDMLQVRKVMEHVYEKIINVDTESQTTSSSNNEKPGEQEKEEDIAVLAEEKIELLCQDQILDPNMDLRTVKHFIWKSGGDLTLHYRQKST</sequence>
<keyword id="KW-0963">Cytoplasm</keyword>
<keyword id="KW-0227">DNA damage</keyword>
<keyword id="KW-0234">DNA repair</keyword>
<keyword id="KW-0238">DNA-binding</keyword>
<keyword id="KW-0967">Endosome</keyword>
<keyword id="KW-0458">Lysosome</keyword>
<keyword id="KW-0539">Nucleus</keyword>
<keyword id="KW-1185">Reference proteome</keyword>
<keyword id="KW-0677">Repeat</keyword>
<keyword id="KW-0833">Ubl conjugation pathway</keyword>
<keyword id="KW-0853">WD repeat</keyword>
<organism>
    <name type="scientific">Xenopus tropicalis</name>
    <name type="common">Western clawed frog</name>
    <name type="synonym">Silurana tropicalis</name>
    <dbReference type="NCBI Taxonomy" id="8364"/>
    <lineage>
        <taxon>Eukaryota</taxon>
        <taxon>Metazoa</taxon>
        <taxon>Chordata</taxon>
        <taxon>Craniata</taxon>
        <taxon>Vertebrata</taxon>
        <taxon>Euteleostomi</taxon>
        <taxon>Amphibia</taxon>
        <taxon>Batrachia</taxon>
        <taxon>Anura</taxon>
        <taxon>Pipoidea</taxon>
        <taxon>Pipidae</taxon>
        <taxon>Xenopodinae</taxon>
        <taxon>Xenopus</taxon>
        <taxon>Silurana</taxon>
    </lineage>
</organism>
<evidence type="ECO:0000250" key="1">
    <source>
        <dbReference type="UniProtKB" id="Q8TAF3"/>
    </source>
</evidence>
<evidence type="ECO:0000256" key="2">
    <source>
        <dbReference type="SAM" id="MobiDB-lite"/>
    </source>
</evidence>
<evidence type="ECO:0000305" key="3"/>
<comment type="function">
    <text evidence="1">Regulator of deubiquitinating complexes, which acts as a strong activator of usp1, usp12 and usp46. Enhances the usp1-mediated deubiquitination of fancd2; usp1 being almost inactive by itself. Activates deubiquitination by increasing the catalytic turnover without increasing the affinity of deubiquitinating enzymes for the substrate. Also activates deubiquitinating activity of complexes containing usp12. Together with rad51ap1, promotes DNA repair by stimulating rad51-mediated homologous recombination. Binds single-stranded DNA (ssDNA) and double-stranded DNA (dsDNA). DNA-binding is required both for usp1-mediated deubiquitination of fancd2 and stimulation of rad51-mediated homologous recombination: both wdr48/uaf1 and rad51ap1 have coordinated role in DNA-binding during these processes. Together with atad5 and by regulating usp1 activity, has a role in pcna-mediated translesion synthesis (TLS) by deubiquitinating monoubiquitinated pcna. Together with atad5, has a role in recruiting rad51 to stalled forks during replication stress.</text>
</comment>
<comment type="subcellular location">
    <subcellularLocation>
        <location evidence="1">Nucleus</location>
    </subcellularLocation>
    <subcellularLocation>
        <location evidence="1">Cytoplasm</location>
    </subcellularLocation>
    <subcellularLocation>
        <location evidence="1">Lysosome</location>
    </subcellularLocation>
    <subcellularLocation>
        <location evidence="1">Late endosome</location>
    </subcellularLocation>
    <text evidence="1">Mainly in cytoplasmic compartments.</text>
</comment>
<comment type="domain">
    <text evidence="1">The WD repeats are required for the interaction with deubiquitinating enzymes USP1, USP12 and USP46.</text>
</comment>
<comment type="similarity">
    <text evidence="3">Belongs to the WD repeat WDR48 family.</text>
</comment>
<gene>
    <name type="primary">wdr48</name>
    <name type="synonym">uaf1</name>
</gene>
<feature type="chain" id="PRO_0000378973" description="WD repeat-containing protein 48">
    <location>
        <begin position="1"/>
        <end position="678"/>
    </location>
</feature>
<feature type="repeat" description="WD 1">
    <location>
        <begin position="28"/>
        <end position="67"/>
    </location>
</feature>
<feature type="repeat" description="WD 2">
    <location>
        <begin position="73"/>
        <end position="112"/>
    </location>
</feature>
<feature type="repeat" description="WD 3">
    <location>
        <begin position="115"/>
        <end position="154"/>
    </location>
</feature>
<feature type="repeat" description="WD 4">
    <location>
        <begin position="166"/>
        <end position="205"/>
    </location>
</feature>
<feature type="repeat" description="WD 5">
    <location>
        <begin position="208"/>
        <end position="247"/>
    </location>
</feature>
<feature type="repeat" description="WD 6">
    <location>
        <begin position="250"/>
        <end position="289"/>
    </location>
</feature>
<feature type="repeat" description="WD 7">
    <location>
        <begin position="292"/>
        <end position="334"/>
    </location>
</feature>
<feature type="repeat" description="WD 8">
    <location>
        <begin position="358"/>
        <end position="397"/>
    </location>
</feature>
<feature type="region of interest" description="Disordered" evidence="2">
    <location>
        <begin position="608"/>
        <end position="629"/>
    </location>
</feature>
<feature type="compositionally biased region" description="Low complexity" evidence="2">
    <location>
        <begin position="610"/>
        <end position="621"/>
    </location>
</feature>
<reference key="1">
    <citation type="submission" date="2006-09" db="EMBL/GenBank/DDBJ databases">
        <authorList>
            <consortium name="NIH - Xenopus Gene Collection (XGC) project"/>
        </authorList>
    </citation>
    <scope>NUCLEOTIDE SEQUENCE [LARGE SCALE MRNA]</scope>
    <source>
        <tissue>Testis</tissue>
    </source>
</reference>